<gene>
    <name evidence="4" type="primary">rco1</name>
    <name type="ORF">AFUA_4G01500</name>
</gene>
<dbReference type="EC" id="1.13.11.-" evidence="3"/>
<dbReference type="EMBL" id="AAHF01000017">
    <property type="protein sequence ID" value="EAL84269.2"/>
    <property type="molecule type" value="Genomic_DNA"/>
</dbReference>
<dbReference type="RefSeq" id="XP_746307.2">
    <property type="nucleotide sequence ID" value="XM_741214.2"/>
</dbReference>
<dbReference type="SMR" id="Q4W9H1"/>
<dbReference type="EnsemblFungi" id="EAL84269">
    <property type="protein sequence ID" value="EAL84269"/>
    <property type="gene ID" value="AFUA_4G01500"/>
</dbReference>
<dbReference type="GeneID" id="3503783"/>
<dbReference type="KEGG" id="afm:AFUA_4G01500"/>
<dbReference type="VEuPathDB" id="FungiDB:Afu4g01500"/>
<dbReference type="eggNOG" id="KOG1285">
    <property type="taxonomic scope" value="Eukaryota"/>
</dbReference>
<dbReference type="HOGENOM" id="CLU_016472_6_2_1"/>
<dbReference type="InParanoid" id="Q4W9H1"/>
<dbReference type="OMA" id="ASYRNRW"/>
<dbReference type="OrthoDB" id="1069523at2759"/>
<dbReference type="Proteomes" id="UP000002530">
    <property type="component" value="Chromosome 4"/>
</dbReference>
<dbReference type="GO" id="GO:0010436">
    <property type="term" value="F:carotenoid dioxygenase activity"/>
    <property type="evidence" value="ECO:0000318"/>
    <property type="project" value="GO_Central"/>
</dbReference>
<dbReference type="GO" id="GO:0046872">
    <property type="term" value="F:metal ion binding"/>
    <property type="evidence" value="ECO:0007669"/>
    <property type="project" value="UniProtKB-KW"/>
</dbReference>
<dbReference type="GO" id="GO:0016121">
    <property type="term" value="P:carotene catabolic process"/>
    <property type="evidence" value="ECO:0000318"/>
    <property type="project" value="GO_Central"/>
</dbReference>
<dbReference type="InterPro" id="IPR004294">
    <property type="entry name" value="Carotenoid_Oase"/>
</dbReference>
<dbReference type="PANTHER" id="PTHR10543">
    <property type="entry name" value="BETA-CAROTENE DIOXYGENASE"/>
    <property type="match status" value="1"/>
</dbReference>
<dbReference type="PANTHER" id="PTHR10543:SF89">
    <property type="entry name" value="CAROTENOID 9,10(9',10')-CLEAVAGE DIOXYGENASE 1"/>
    <property type="match status" value="1"/>
</dbReference>
<dbReference type="Pfam" id="PF03055">
    <property type="entry name" value="RPE65"/>
    <property type="match status" value="1"/>
</dbReference>
<accession>Q4W9H1</accession>
<sequence length="498" mass="57007">MSEMRTHFPDRPQFSGFMKPCRVEGDISQLEVYGEIPKEIDGVFYRVMPDPQLPPFIENDPWFNGDGNVTAFRIQDGRASFRQRYVRTEKFMRERKAQRALLGKYRNKFTDAVEFRVRSTANTNVVFFNGQLLALKEDSPPYAMDPITLETKGLYDFEGQLPALTFTAHPKFDPVTGEMVCFGYEARGDGTPDVCYYRVSPTGQFKEVVWLVAPVVAMIHDFAVTDNWVVFPIIPQVCDIERMKQGGEHWQWSPETPLYLGVIPRRGAKGEDVKWFQYKNSFPGHTANAYEDKEGHLVIDLGLSEKNVFFWWPDAQGNAPEPSSIHSQLVRFTLNPHAEDLALPEPKILHQGNSEFYRIDDRFATHSYRHCYFDLMDPQLGTDFERIRPNLGGGYPLYNSLAHFDNATGQTEVYFPGNTHLVQEPVFIPRKDSTTEGDGWVLALVNNYATMASELHLLDTRDFTHAQAKILLPIRLRHGLHGSWVDGRDIGSQTEQLQ</sequence>
<name>RCO1_ASPFU</name>
<keyword id="KW-0223">Dioxygenase</keyword>
<keyword id="KW-0408">Iron</keyword>
<keyword id="KW-0479">Metal-binding</keyword>
<keyword id="KW-0560">Oxidoreductase</keyword>
<keyword id="KW-1185">Reference proteome</keyword>
<evidence type="ECO:0000250" key="1">
    <source>
        <dbReference type="UniProtKB" id="A0A0D1E6L2"/>
    </source>
</evidence>
<evidence type="ECO:0000250" key="2">
    <source>
        <dbReference type="UniProtKB" id="Q7S860"/>
    </source>
</evidence>
<evidence type="ECO:0000269" key="3">
    <source>
    </source>
</evidence>
<evidence type="ECO:0000303" key="4">
    <source>
    </source>
</evidence>
<evidence type="ECO:0000305" key="5"/>
<reference key="1">
    <citation type="journal article" date="2005" name="Nature">
        <title>Genomic sequence of the pathogenic and allergenic filamentous fungus Aspergillus fumigatus.</title>
        <authorList>
            <person name="Nierman W.C."/>
            <person name="Pain A."/>
            <person name="Anderson M.J."/>
            <person name="Wortman J.R."/>
            <person name="Kim H.S."/>
            <person name="Arroyo J."/>
            <person name="Berriman M."/>
            <person name="Abe K."/>
            <person name="Archer D.B."/>
            <person name="Bermejo C."/>
            <person name="Bennett J.W."/>
            <person name="Bowyer P."/>
            <person name="Chen D."/>
            <person name="Collins M."/>
            <person name="Coulsen R."/>
            <person name="Davies R."/>
            <person name="Dyer P.S."/>
            <person name="Farman M.L."/>
            <person name="Fedorova N."/>
            <person name="Fedorova N.D."/>
            <person name="Feldblyum T.V."/>
            <person name="Fischer R."/>
            <person name="Fosker N."/>
            <person name="Fraser A."/>
            <person name="Garcia J.L."/>
            <person name="Garcia M.J."/>
            <person name="Goble A."/>
            <person name="Goldman G.H."/>
            <person name="Gomi K."/>
            <person name="Griffith-Jones S."/>
            <person name="Gwilliam R."/>
            <person name="Haas B.J."/>
            <person name="Haas H."/>
            <person name="Harris D.E."/>
            <person name="Horiuchi H."/>
            <person name="Huang J."/>
            <person name="Humphray S."/>
            <person name="Jimenez J."/>
            <person name="Keller N."/>
            <person name="Khouri H."/>
            <person name="Kitamoto K."/>
            <person name="Kobayashi T."/>
            <person name="Konzack S."/>
            <person name="Kulkarni R."/>
            <person name="Kumagai T."/>
            <person name="Lafton A."/>
            <person name="Latge J.-P."/>
            <person name="Li W."/>
            <person name="Lord A."/>
            <person name="Lu C."/>
            <person name="Majoros W.H."/>
            <person name="May G.S."/>
            <person name="Miller B.L."/>
            <person name="Mohamoud Y."/>
            <person name="Molina M."/>
            <person name="Monod M."/>
            <person name="Mouyna I."/>
            <person name="Mulligan S."/>
            <person name="Murphy L.D."/>
            <person name="O'Neil S."/>
            <person name="Paulsen I."/>
            <person name="Penalva M.A."/>
            <person name="Pertea M."/>
            <person name="Price C."/>
            <person name="Pritchard B.L."/>
            <person name="Quail M.A."/>
            <person name="Rabbinowitsch E."/>
            <person name="Rawlins N."/>
            <person name="Rajandream M.A."/>
            <person name="Reichard U."/>
            <person name="Renauld H."/>
            <person name="Robson G.D."/>
            <person name="Rodriguez de Cordoba S."/>
            <person name="Rodriguez-Pena J.M."/>
            <person name="Ronning C.M."/>
            <person name="Rutter S."/>
            <person name="Salzberg S.L."/>
            <person name="Sanchez M."/>
            <person name="Sanchez-Ferrero J.C."/>
            <person name="Saunders D."/>
            <person name="Seeger K."/>
            <person name="Squares R."/>
            <person name="Squares S."/>
            <person name="Takeuchi M."/>
            <person name="Tekaia F."/>
            <person name="Turner G."/>
            <person name="Vazquez de Aldana C.R."/>
            <person name="Weidman J."/>
            <person name="White O."/>
            <person name="Woodward J.R."/>
            <person name="Yu J.-H."/>
            <person name="Fraser C.M."/>
            <person name="Galagan J.E."/>
            <person name="Asai K."/>
            <person name="Machida M."/>
            <person name="Hall N."/>
            <person name="Barrell B.G."/>
            <person name="Denning D.W."/>
        </authorList>
    </citation>
    <scope>NUCLEOTIDE SEQUENCE [LARGE SCALE GENOMIC DNA]</scope>
    <source>
        <strain>ATCC MYA-4609 / CBS 101355 / FGSC A1100 / Af293</strain>
    </source>
</reference>
<reference key="2">
    <citation type="journal article" date="2011" name="Fungal Genet. Biol.">
        <title>Cleavage of resveratrol in fungi: characterization of the enzyme Rco1 from Ustilago maydis.</title>
        <authorList>
            <person name="Brefort T."/>
            <person name="Scherzinger D."/>
            <person name="Limon M.C."/>
            <person name="Estrada A.F."/>
            <person name="Trautmann D."/>
            <person name="Mengel C."/>
            <person name="Avalos J."/>
            <person name="Al-Babili S."/>
        </authorList>
    </citation>
    <scope>FUNCTION</scope>
    <scope>CATALYTIC ACTIVITY</scope>
</reference>
<feature type="chain" id="PRO_0000456952" description="Resveratrol cleavage oxygenase 1">
    <location>
        <begin position="1"/>
        <end position="498"/>
    </location>
</feature>
<feature type="binding site" evidence="2">
    <location>
        <position position="105"/>
    </location>
    <ligand>
        <name>piceatannol</name>
        <dbReference type="ChEBI" id="CHEBI:28814"/>
    </ligand>
</feature>
<feature type="binding site" evidence="2">
    <location>
        <position position="105"/>
    </location>
    <ligand>
        <name>trans-resveratrol</name>
        <dbReference type="ChEBI" id="CHEBI:45713"/>
    </ligand>
</feature>
<feature type="binding site" evidence="2">
    <location>
        <position position="136"/>
    </location>
    <ligand>
        <name>piceatannol</name>
        <dbReference type="ChEBI" id="CHEBI:28814"/>
    </ligand>
</feature>
<feature type="binding site" evidence="2">
    <location>
        <position position="136"/>
    </location>
    <ligand>
        <name>trans-resveratrol</name>
        <dbReference type="ChEBI" id="CHEBI:45713"/>
    </ligand>
</feature>
<feature type="binding site" evidence="2">
    <location>
        <position position="169"/>
    </location>
    <ligand>
        <name>Fe cation</name>
        <dbReference type="ChEBI" id="CHEBI:24875"/>
        <note>catalytic</note>
    </ligand>
</feature>
<feature type="binding site" evidence="2">
    <location>
        <position position="220"/>
    </location>
    <ligand>
        <name>Fe cation</name>
        <dbReference type="ChEBI" id="CHEBI:24875"/>
        <note>catalytic</note>
    </ligand>
</feature>
<feature type="binding site" evidence="2">
    <location>
        <position position="285"/>
    </location>
    <ligand>
        <name>Fe cation</name>
        <dbReference type="ChEBI" id="CHEBI:24875"/>
        <note>catalytic</note>
    </ligand>
</feature>
<feature type="binding site" evidence="2">
    <location>
        <position position="355"/>
    </location>
    <ligand>
        <name>piceatannol</name>
        <dbReference type="ChEBI" id="CHEBI:28814"/>
    </ligand>
</feature>
<feature type="binding site" evidence="2">
    <location>
        <position position="355"/>
    </location>
    <ligand>
        <name>trans-resveratrol</name>
        <dbReference type="ChEBI" id="CHEBI:45713"/>
    </ligand>
</feature>
<feature type="binding site" evidence="2">
    <location>
        <position position="481"/>
    </location>
    <ligand>
        <name>Fe cation</name>
        <dbReference type="ChEBI" id="CHEBI:24875"/>
        <note>catalytic</note>
    </ligand>
</feature>
<protein>
    <recommendedName>
        <fullName evidence="4">Resveratrol cleavage oxygenase 1</fullName>
        <shortName evidence="4">RCO 1</shortName>
        <ecNumber evidence="3">1.13.11.-</ecNumber>
    </recommendedName>
</protein>
<organism>
    <name type="scientific">Aspergillus fumigatus (strain ATCC MYA-4609 / CBS 101355 / FGSC A1100 / Af293)</name>
    <name type="common">Neosartorya fumigata</name>
    <dbReference type="NCBI Taxonomy" id="330879"/>
    <lineage>
        <taxon>Eukaryota</taxon>
        <taxon>Fungi</taxon>
        <taxon>Dikarya</taxon>
        <taxon>Ascomycota</taxon>
        <taxon>Pezizomycotina</taxon>
        <taxon>Eurotiomycetes</taxon>
        <taxon>Eurotiomycetidae</taxon>
        <taxon>Eurotiales</taxon>
        <taxon>Aspergillaceae</taxon>
        <taxon>Aspergillus</taxon>
        <taxon>Aspergillus subgen. Fumigati</taxon>
    </lineage>
</organism>
<proteinExistence type="evidence at protein level"/>
<comment type="function">
    <text evidence="1 3">Dioxygenase that cleaves the interphenyl C-alpha-C-beta double bond of resveratrol to yield 3,5-dihydroxybenzaldehyde and 4-hydroxybenzaldehyde (PubMed:21073977). Also cleaves piceatannol, a compound that differs from resveratrol only in the occurrence of an additional hydroxyl group, which leads to the production of 3,4-dihydroxybenzaldehyde and 3,5-hydroxybenzaldehyde (By similarity).</text>
</comment>
<comment type="catalytic activity">
    <reaction evidence="3">
        <text>trans-resveratrol + O2 = 3,5-dihydroxybenzaldehyde + 4-hydroxybenzaldehyde</text>
        <dbReference type="Rhea" id="RHEA:73735"/>
        <dbReference type="ChEBI" id="CHEBI:15379"/>
        <dbReference type="ChEBI" id="CHEBI:17597"/>
        <dbReference type="ChEBI" id="CHEBI:45713"/>
        <dbReference type="ChEBI" id="CHEBI:50204"/>
    </reaction>
    <physiologicalReaction direction="left-to-right" evidence="3">
        <dbReference type="Rhea" id="RHEA:73736"/>
    </physiologicalReaction>
</comment>
<comment type="catalytic activity">
    <reaction evidence="1">
        <text>piceatannol + O2 = 3,5-dihydroxybenzaldehyde + 3,4-dihydroxybenzaldehyde</text>
        <dbReference type="Rhea" id="RHEA:73815"/>
        <dbReference type="ChEBI" id="CHEBI:15379"/>
        <dbReference type="ChEBI" id="CHEBI:28814"/>
        <dbReference type="ChEBI" id="CHEBI:50204"/>
        <dbReference type="ChEBI" id="CHEBI:50205"/>
    </reaction>
    <physiologicalReaction direction="left-to-right" evidence="1">
        <dbReference type="Rhea" id="RHEA:73816"/>
    </physiologicalReaction>
</comment>
<comment type="cofactor">
    <cofactor evidence="2">
        <name>Fe(2+)</name>
        <dbReference type="ChEBI" id="CHEBI:29033"/>
    </cofactor>
    <text evidence="2">Binds 1 Fe(2+) ion per subunit.</text>
</comment>
<comment type="similarity">
    <text evidence="5">Belongs to the carotenoid oxygenase family.</text>
</comment>